<gene>
    <name evidence="1" type="primary">purA</name>
    <name type="ordered locus">PTH_2883</name>
</gene>
<feature type="chain" id="PRO_1000073953" description="Adenylosuccinate synthetase">
    <location>
        <begin position="1"/>
        <end position="427"/>
    </location>
</feature>
<feature type="active site" description="Proton acceptor" evidence="1">
    <location>
        <position position="13"/>
    </location>
</feature>
<feature type="active site" description="Proton donor" evidence="1">
    <location>
        <position position="41"/>
    </location>
</feature>
<feature type="binding site" evidence="1">
    <location>
        <begin position="12"/>
        <end position="18"/>
    </location>
    <ligand>
        <name>GTP</name>
        <dbReference type="ChEBI" id="CHEBI:37565"/>
    </ligand>
</feature>
<feature type="binding site" description="in other chain" evidence="1">
    <location>
        <begin position="13"/>
        <end position="16"/>
    </location>
    <ligand>
        <name>IMP</name>
        <dbReference type="ChEBI" id="CHEBI:58053"/>
        <note>ligand shared between dimeric partners</note>
    </ligand>
</feature>
<feature type="binding site" evidence="1">
    <location>
        <position position="13"/>
    </location>
    <ligand>
        <name>Mg(2+)</name>
        <dbReference type="ChEBI" id="CHEBI:18420"/>
    </ligand>
</feature>
<feature type="binding site" description="in other chain" evidence="1">
    <location>
        <begin position="38"/>
        <end position="41"/>
    </location>
    <ligand>
        <name>IMP</name>
        <dbReference type="ChEBI" id="CHEBI:58053"/>
        <note>ligand shared between dimeric partners</note>
    </ligand>
</feature>
<feature type="binding site" evidence="1">
    <location>
        <begin position="40"/>
        <end position="42"/>
    </location>
    <ligand>
        <name>GTP</name>
        <dbReference type="ChEBI" id="CHEBI:37565"/>
    </ligand>
</feature>
<feature type="binding site" evidence="1">
    <location>
        <position position="40"/>
    </location>
    <ligand>
        <name>Mg(2+)</name>
        <dbReference type="ChEBI" id="CHEBI:18420"/>
    </ligand>
</feature>
<feature type="binding site" description="in other chain" evidence="1">
    <location>
        <position position="128"/>
    </location>
    <ligand>
        <name>IMP</name>
        <dbReference type="ChEBI" id="CHEBI:58053"/>
        <note>ligand shared between dimeric partners</note>
    </ligand>
</feature>
<feature type="binding site" evidence="1">
    <location>
        <position position="142"/>
    </location>
    <ligand>
        <name>IMP</name>
        <dbReference type="ChEBI" id="CHEBI:58053"/>
        <note>ligand shared between dimeric partners</note>
    </ligand>
</feature>
<feature type="binding site" description="in other chain" evidence="1">
    <location>
        <position position="223"/>
    </location>
    <ligand>
        <name>IMP</name>
        <dbReference type="ChEBI" id="CHEBI:58053"/>
        <note>ligand shared between dimeric partners</note>
    </ligand>
</feature>
<feature type="binding site" description="in other chain" evidence="1">
    <location>
        <position position="238"/>
    </location>
    <ligand>
        <name>IMP</name>
        <dbReference type="ChEBI" id="CHEBI:58053"/>
        <note>ligand shared between dimeric partners</note>
    </ligand>
</feature>
<feature type="binding site" evidence="1">
    <location>
        <begin position="298"/>
        <end position="304"/>
    </location>
    <ligand>
        <name>substrate</name>
    </ligand>
</feature>
<feature type="binding site" description="in other chain" evidence="1">
    <location>
        <position position="302"/>
    </location>
    <ligand>
        <name>IMP</name>
        <dbReference type="ChEBI" id="CHEBI:58053"/>
        <note>ligand shared between dimeric partners</note>
    </ligand>
</feature>
<feature type="binding site" evidence="1">
    <location>
        <position position="304"/>
    </location>
    <ligand>
        <name>GTP</name>
        <dbReference type="ChEBI" id="CHEBI:37565"/>
    </ligand>
</feature>
<feature type="binding site" evidence="1">
    <location>
        <begin position="330"/>
        <end position="332"/>
    </location>
    <ligand>
        <name>GTP</name>
        <dbReference type="ChEBI" id="CHEBI:37565"/>
    </ligand>
</feature>
<feature type="binding site" evidence="1">
    <location>
        <begin position="412"/>
        <end position="414"/>
    </location>
    <ligand>
        <name>GTP</name>
        <dbReference type="ChEBI" id="CHEBI:37565"/>
    </ligand>
</feature>
<protein>
    <recommendedName>
        <fullName evidence="1">Adenylosuccinate synthetase</fullName>
        <shortName evidence="1">AMPSase</shortName>
        <shortName evidence="1">AdSS</shortName>
        <ecNumber evidence="1">6.3.4.4</ecNumber>
    </recommendedName>
    <alternativeName>
        <fullName evidence="1">IMP--aspartate ligase</fullName>
    </alternativeName>
</protein>
<comment type="function">
    <text evidence="1">Plays an important role in the de novo pathway of purine nucleotide biosynthesis. Catalyzes the first committed step in the biosynthesis of AMP from IMP.</text>
</comment>
<comment type="catalytic activity">
    <reaction evidence="1">
        <text>IMP + L-aspartate + GTP = N(6)-(1,2-dicarboxyethyl)-AMP + GDP + phosphate + 2 H(+)</text>
        <dbReference type="Rhea" id="RHEA:15753"/>
        <dbReference type="ChEBI" id="CHEBI:15378"/>
        <dbReference type="ChEBI" id="CHEBI:29991"/>
        <dbReference type="ChEBI" id="CHEBI:37565"/>
        <dbReference type="ChEBI" id="CHEBI:43474"/>
        <dbReference type="ChEBI" id="CHEBI:57567"/>
        <dbReference type="ChEBI" id="CHEBI:58053"/>
        <dbReference type="ChEBI" id="CHEBI:58189"/>
        <dbReference type="EC" id="6.3.4.4"/>
    </reaction>
</comment>
<comment type="cofactor">
    <cofactor evidence="1">
        <name>Mg(2+)</name>
        <dbReference type="ChEBI" id="CHEBI:18420"/>
    </cofactor>
    <text evidence="1">Binds 1 Mg(2+) ion per subunit.</text>
</comment>
<comment type="pathway">
    <text evidence="1">Purine metabolism; AMP biosynthesis via de novo pathway; AMP from IMP: step 1/2.</text>
</comment>
<comment type="subunit">
    <text evidence="1">Homodimer.</text>
</comment>
<comment type="subcellular location">
    <subcellularLocation>
        <location evidence="1">Cytoplasm</location>
    </subcellularLocation>
</comment>
<comment type="similarity">
    <text evidence="1">Belongs to the adenylosuccinate synthetase family.</text>
</comment>
<organism>
    <name type="scientific">Pelotomaculum thermopropionicum (strain DSM 13744 / JCM 10971 / SI)</name>
    <dbReference type="NCBI Taxonomy" id="370438"/>
    <lineage>
        <taxon>Bacteria</taxon>
        <taxon>Bacillati</taxon>
        <taxon>Bacillota</taxon>
        <taxon>Clostridia</taxon>
        <taxon>Eubacteriales</taxon>
        <taxon>Desulfotomaculaceae</taxon>
        <taxon>Pelotomaculum</taxon>
    </lineage>
</organism>
<reference key="1">
    <citation type="journal article" date="2008" name="Genome Res.">
        <title>The genome of Pelotomaculum thermopropionicum reveals niche-associated evolution in anaerobic microbiota.</title>
        <authorList>
            <person name="Kosaka T."/>
            <person name="Kato S."/>
            <person name="Shimoyama T."/>
            <person name="Ishii S."/>
            <person name="Abe T."/>
            <person name="Watanabe K."/>
        </authorList>
    </citation>
    <scope>NUCLEOTIDE SEQUENCE [LARGE SCALE GENOMIC DNA]</scope>
    <source>
        <strain>DSM 13744 / JCM 10971 / SI</strain>
    </source>
</reference>
<evidence type="ECO:0000255" key="1">
    <source>
        <dbReference type="HAMAP-Rule" id="MF_00011"/>
    </source>
</evidence>
<name>PURA_PELTS</name>
<keyword id="KW-0963">Cytoplasm</keyword>
<keyword id="KW-0342">GTP-binding</keyword>
<keyword id="KW-0436">Ligase</keyword>
<keyword id="KW-0460">Magnesium</keyword>
<keyword id="KW-0479">Metal-binding</keyword>
<keyword id="KW-0547">Nucleotide-binding</keyword>
<keyword id="KW-0658">Purine biosynthesis</keyword>
<keyword id="KW-1185">Reference proteome</keyword>
<sequence length="427" mass="46414">MSTVVLVGAQWGDEGKGKVTDFLAEKADLVVRYQGGNNAGHTVVVGDREFKLHLIPSGILYPDKICVIGNGVVIDPAVLIGEMEALAKQGISTANLKISQRAHVIFPYHQRLDQVEENRKGSGKIGTTCRGIGPAYTDKSARIGIRMADLVDEEVFAALLEQNMKDKNHLFTRVYGLPPLDYGSVLESYRGYAKALKGYVTDISIIINEAIKQGKNILFEGAQGTLLDIDHGTYPYVTSSHPVAAAACIGVGIGPTRINRVIGVAKAYITRVGEGPFPTEMKDELGDYIRKKGGEFGTTTGRPRRCGWFDGVAGRYAVRVNGLDYLAVTKLDVLSGLEKVKICTGYLYHGDILNEFPASLKVLRECVPVYDELPGWQEDISGARKLSDLPANARRYLERIGEVTGAPIALIGVGSRRSQTILTAELY</sequence>
<dbReference type="EC" id="6.3.4.4" evidence="1"/>
<dbReference type="EMBL" id="AP009389">
    <property type="protein sequence ID" value="BAF61064.1"/>
    <property type="molecule type" value="Genomic_DNA"/>
</dbReference>
<dbReference type="SMR" id="A5CY74"/>
<dbReference type="STRING" id="370438.PTH_2883"/>
<dbReference type="KEGG" id="pth:PTH_2883"/>
<dbReference type="eggNOG" id="COG0104">
    <property type="taxonomic scope" value="Bacteria"/>
</dbReference>
<dbReference type="HOGENOM" id="CLU_029848_0_0_9"/>
<dbReference type="UniPathway" id="UPA00075">
    <property type="reaction ID" value="UER00335"/>
</dbReference>
<dbReference type="Proteomes" id="UP000006556">
    <property type="component" value="Chromosome"/>
</dbReference>
<dbReference type="GO" id="GO:0005737">
    <property type="term" value="C:cytoplasm"/>
    <property type="evidence" value="ECO:0007669"/>
    <property type="project" value="UniProtKB-SubCell"/>
</dbReference>
<dbReference type="GO" id="GO:0004019">
    <property type="term" value="F:adenylosuccinate synthase activity"/>
    <property type="evidence" value="ECO:0007669"/>
    <property type="project" value="UniProtKB-UniRule"/>
</dbReference>
<dbReference type="GO" id="GO:0005525">
    <property type="term" value="F:GTP binding"/>
    <property type="evidence" value="ECO:0007669"/>
    <property type="project" value="UniProtKB-UniRule"/>
</dbReference>
<dbReference type="GO" id="GO:0000287">
    <property type="term" value="F:magnesium ion binding"/>
    <property type="evidence" value="ECO:0007669"/>
    <property type="project" value="UniProtKB-UniRule"/>
</dbReference>
<dbReference type="GO" id="GO:0044208">
    <property type="term" value="P:'de novo' AMP biosynthetic process"/>
    <property type="evidence" value="ECO:0007669"/>
    <property type="project" value="UniProtKB-UniRule"/>
</dbReference>
<dbReference type="GO" id="GO:0046040">
    <property type="term" value="P:IMP metabolic process"/>
    <property type="evidence" value="ECO:0007669"/>
    <property type="project" value="TreeGrafter"/>
</dbReference>
<dbReference type="CDD" id="cd03108">
    <property type="entry name" value="AdSS"/>
    <property type="match status" value="1"/>
</dbReference>
<dbReference type="FunFam" id="1.10.300.10:FF:000001">
    <property type="entry name" value="Adenylosuccinate synthetase"/>
    <property type="match status" value="1"/>
</dbReference>
<dbReference type="FunFam" id="3.90.170.10:FF:000001">
    <property type="entry name" value="Adenylosuccinate synthetase"/>
    <property type="match status" value="1"/>
</dbReference>
<dbReference type="Gene3D" id="3.40.440.10">
    <property type="entry name" value="Adenylosuccinate Synthetase, subunit A, domain 1"/>
    <property type="match status" value="1"/>
</dbReference>
<dbReference type="Gene3D" id="1.10.300.10">
    <property type="entry name" value="Adenylosuccinate Synthetase, subunit A, domain 2"/>
    <property type="match status" value="1"/>
</dbReference>
<dbReference type="Gene3D" id="3.90.170.10">
    <property type="entry name" value="Adenylosuccinate Synthetase, subunit A, domain 3"/>
    <property type="match status" value="1"/>
</dbReference>
<dbReference type="HAMAP" id="MF_00011">
    <property type="entry name" value="Adenylosucc_synth"/>
    <property type="match status" value="1"/>
</dbReference>
<dbReference type="InterPro" id="IPR018220">
    <property type="entry name" value="Adenylosuccin_syn_GTP-bd"/>
</dbReference>
<dbReference type="InterPro" id="IPR033128">
    <property type="entry name" value="Adenylosuccin_syn_Lys_AS"/>
</dbReference>
<dbReference type="InterPro" id="IPR042109">
    <property type="entry name" value="Adenylosuccinate_synth_dom1"/>
</dbReference>
<dbReference type="InterPro" id="IPR042110">
    <property type="entry name" value="Adenylosuccinate_synth_dom2"/>
</dbReference>
<dbReference type="InterPro" id="IPR042111">
    <property type="entry name" value="Adenylosuccinate_synth_dom3"/>
</dbReference>
<dbReference type="InterPro" id="IPR001114">
    <property type="entry name" value="Adenylosuccinate_synthetase"/>
</dbReference>
<dbReference type="InterPro" id="IPR027417">
    <property type="entry name" value="P-loop_NTPase"/>
</dbReference>
<dbReference type="NCBIfam" id="NF002223">
    <property type="entry name" value="PRK01117.1"/>
    <property type="match status" value="1"/>
</dbReference>
<dbReference type="NCBIfam" id="TIGR00184">
    <property type="entry name" value="purA"/>
    <property type="match status" value="1"/>
</dbReference>
<dbReference type="PANTHER" id="PTHR11846">
    <property type="entry name" value="ADENYLOSUCCINATE SYNTHETASE"/>
    <property type="match status" value="1"/>
</dbReference>
<dbReference type="PANTHER" id="PTHR11846:SF0">
    <property type="entry name" value="ADENYLOSUCCINATE SYNTHETASE"/>
    <property type="match status" value="1"/>
</dbReference>
<dbReference type="Pfam" id="PF00709">
    <property type="entry name" value="Adenylsucc_synt"/>
    <property type="match status" value="1"/>
</dbReference>
<dbReference type="SMART" id="SM00788">
    <property type="entry name" value="Adenylsucc_synt"/>
    <property type="match status" value="1"/>
</dbReference>
<dbReference type="SUPFAM" id="SSF52540">
    <property type="entry name" value="P-loop containing nucleoside triphosphate hydrolases"/>
    <property type="match status" value="1"/>
</dbReference>
<dbReference type="PROSITE" id="PS01266">
    <property type="entry name" value="ADENYLOSUCCIN_SYN_1"/>
    <property type="match status" value="1"/>
</dbReference>
<dbReference type="PROSITE" id="PS00513">
    <property type="entry name" value="ADENYLOSUCCIN_SYN_2"/>
    <property type="match status" value="1"/>
</dbReference>
<accession>A5CY74</accession>
<proteinExistence type="inferred from homology"/>